<feature type="chain" id="PRO_0000399321" description="Adenylosuccinate synthetase">
    <location>
        <begin position="1"/>
        <end position="424"/>
    </location>
</feature>
<feature type="active site" description="Proton acceptor" evidence="2">
    <location>
        <position position="13"/>
    </location>
</feature>
<feature type="active site" description="Proton donor" evidence="2">
    <location>
        <position position="41"/>
    </location>
</feature>
<feature type="binding site" evidence="2">
    <location>
        <begin position="12"/>
        <end position="18"/>
    </location>
    <ligand>
        <name>GTP</name>
        <dbReference type="ChEBI" id="CHEBI:37565"/>
    </ligand>
</feature>
<feature type="binding site" description="in other chain" evidence="2">
    <location>
        <begin position="13"/>
        <end position="16"/>
    </location>
    <ligand>
        <name>IMP</name>
        <dbReference type="ChEBI" id="CHEBI:58053"/>
        <note>ligand shared between dimeric partners</note>
    </ligand>
</feature>
<feature type="binding site" evidence="2">
    <location>
        <position position="13"/>
    </location>
    <ligand>
        <name>Mg(2+)</name>
        <dbReference type="ChEBI" id="CHEBI:18420"/>
    </ligand>
</feature>
<feature type="binding site" description="in other chain" evidence="2">
    <location>
        <begin position="38"/>
        <end position="41"/>
    </location>
    <ligand>
        <name>IMP</name>
        <dbReference type="ChEBI" id="CHEBI:58053"/>
        <note>ligand shared between dimeric partners</note>
    </ligand>
</feature>
<feature type="binding site" evidence="2">
    <location>
        <begin position="40"/>
        <end position="42"/>
    </location>
    <ligand>
        <name>GTP</name>
        <dbReference type="ChEBI" id="CHEBI:37565"/>
    </ligand>
</feature>
<feature type="binding site" evidence="2">
    <location>
        <position position="40"/>
    </location>
    <ligand>
        <name>Mg(2+)</name>
        <dbReference type="ChEBI" id="CHEBI:18420"/>
    </ligand>
</feature>
<feature type="binding site" description="in other chain" evidence="2">
    <location>
        <position position="130"/>
    </location>
    <ligand>
        <name>IMP</name>
        <dbReference type="ChEBI" id="CHEBI:58053"/>
        <note>ligand shared between dimeric partners</note>
    </ligand>
</feature>
<feature type="binding site" evidence="2">
    <location>
        <position position="144"/>
    </location>
    <ligand>
        <name>IMP</name>
        <dbReference type="ChEBI" id="CHEBI:58053"/>
        <note>ligand shared between dimeric partners</note>
    </ligand>
</feature>
<feature type="binding site" description="in other chain" evidence="2">
    <location>
        <position position="220"/>
    </location>
    <ligand>
        <name>IMP</name>
        <dbReference type="ChEBI" id="CHEBI:58053"/>
        <note>ligand shared between dimeric partners</note>
    </ligand>
</feature>
<feature type="binding site" description="in other chain" evidence="2">
    <location>
        <position position="235"/>
    </location>
    <ligand>
        <name>IMP</name>
        <dbReference type="ChEBI" id="CHEBI:58053"/>
        <note>ligand shared between dimeric partners</note>
    </ligand>
</feature>
<feature type="binding site" evidence="2">
    <location>
        <begin position="295"/>
        <end position="301"/>
    </location>
    <ligand>
        <name>substrate</name>
    </ligand>
</feature>
<feature type="binding site" description="in other chain" evidence="2">
    <location>
        <position position="299"/>
    </location>
    <ligand>
        <name>IMP</name>
        <dbReference type="ChEBI" id="CHEBI:58053"/>
        <note>ligand shared between dimeric partners</note>
    </ligand>
</feature>
<feature type="binding site" evidence="2">
    <location>
        <position position="301"/>
    </location>
    <ligand>
        <name>GTP</name>
        <dbReference type="ChEBI" id="CHEBI:37565"/>
    </ligand>
</feature>
<feature type="binding site" evidence="2">
    <location>
        <begin position="327"/>
        <end position="329"/>
    </location>
    <ligand>
        <name>GTP</name>
        <dbReference type="ChEBI" id="CHEBI:37565"/>
    </ligand>
</feature>
<feature type="binding site" evidence="2">
    <location>
        <begin position="412"/>
        <end position="414"/>
    </location>
    <ligand>
        <name>GTP</name>
        <dbReference type="ChEBI" id="CHEBI:37565"/>
    </ligand>
</feature>
<protein>
    <recommendedName>
        <fullName evidence="2">Adenylosuccinate synthetase</fullName>
        <shortName evidence="2">AMPSase</shortName>
        <shortName evidence="2">AdSS</shortName>
        <ecNumber evidence="2">6.3.4.4</ecNumber>
    </recommendedName>
    <alternativeName>
        <fullName evidence="2">IMP--aspartate ligase</fullName>
    </alternativeName>
</protein>
<accession>Q4WRQ7</accession>
<sequence>MGITIVLGSQWGDEGKGKITDMLSQQATLCCRAAGGHNAGHTIVHENITYDFHILPSGLVSPSCVNLIGAGTVVHVPSFFKELASLEEKGLKDAGKRIFISDRAHVCFDLHSIVDGLEEAKLGGRKVGTTGKGIGPCYSDKAARRGVRIGEVLDEAVFERKLRSLHAGYTARFGELQYDVEEEIGRFKDYRKRLVPYIVDQLAFFKQYKDSPNTLVEGANALMLDLDHGTYPYVTSSSTGLGGAVQALSLNPTSITSVIGVVKAYTTRVGSGPFPSEQLNEYGDKLQSVGREFGVTTGRRRRCGWFDLVLCRYSQAINHYTALNLTKLDILDDFDEIKVAVAYVLPDGTRLTDTYPADPEVLEKVKVEYVTLPGWKSNTMGVKKYEDLPANARAYIEYIERELGGVPIKWIGTGPARDHMICRE</sequence>
<keyword id="KW-0963">Cytoplasm</keyword>
<keyword id="KW-0342">GTP-binding</keyword>
<keyword id="KW-0436">Ligase</keyword>
<keyword id="KW-0460">Magnesium</keyword>
<keyword id="KW-0479">Metal-binding</keyword>
<keyword id="KW-0547">Nucleotide-binding</keyword>
<keyword id="KW-0658">Purine biosynthesis</keyword>
<keyword id="KW-1185">Reference proteome</keyword>
<name>PURA_ASPFU</name>
<proteinExistence type="inferred from homology"/>
<comment type="function">
    <text evidence="1">Plays an important role in the de novo pathway and in the salvage pathway of purine nucleotide biosynthesis. Catalyzes the first committed step in the biosynthesis of AMP from IMP (By similarity).</text>
</comment>
<comment type="catalytic activity">
    <reaction evidence="2">
        <text>IMP + L-aspartate + GTP = N(6)-(1,2-dicarboxyethyl)-AMP + GDP + phosphate + 2 H(+)</text>
        <dbReference type="Rhea" id="RHEA:15753"/>
        <dbReference type="ChEBI" id="CHEBI:15378"/>
        <dbReference type="ChEBI" id="CHEBI:29991"/>
        <dbReference type="ChEBI" id="CHEBI:37565"/>
        <dbReference type="ChEBI" id="CHEBI:43474"/>
        <dbReference type="ChEBI" id="CHEBI:57567"/>
        <dbReference type="ChEBI" id="CHEBI:58053"/>
        <dbReference type="ChEBI" id="CHEBI:58189"/>
        <dbReference type="EC" id="6.3.4.4"/>
    </reaction>
</comment>
<comment type="cofactor">
    <cofactor evidence="2">
        <name>Mg(2+)</name>
        <dbReference type="ChEBI" id="CHEBI:18420"/>
    </cofactor>
    <text evidence="2">Binds 1 Mg(2+) ion per subunit.</text>
</comment>
<comment type="pathway">
    <text evidence="2">Purine metabolism; AMP biosynthesis via de novo pathway; AMP from IMP: step 1/2.</text>
</comment>
<comment type="subunit">
    <text evidence="2">Homodimer.</text>
</comment>
<comment type="subcellular location">
    <subcellularLocation>
        <location evidence="2">Cytoplasm</location>
    </subcellularLocation>
</comment>
<comment type="similarity">
    <text evidence="2">Belongs to the adenylosuccinate synthetase family.</text>
</comment>
<dbReference type="EC" id="6.3.4.4" evidence="2"/>
<dbReference type="EMBL" id="AAHF01000004">
    <property type="protein sequence ID" value="EAL90875.1"/>
    <property type="molecule type" value="Genomic_DNA"/>
</dbReference>
<dbReference type="RefSeq" id="XP_752913.1">
    <property type="nucleotide sequence ID" value="XM_747820.1"/>
</dbReference>
<dbReference type="SMR" id="Q4WRQ7"/>
<dbReference type="FunCoup" id="Q4WRQ7">
    <property type="interactions" value="806"/>
</dbReference>
<dbReference type="STRING" id="330879.Q4WRQ7"/>
<dbReference type="EnsemblFungi" id="EAL90875">
    <property type="protein sequence ID" value="EAL90875"/>
    <property type="gene ID" value="AFUA_1G15450"/>
</dbReference>
<dbReference type="GeneID" id="3509937"/>
<dbReference type="KEGG" id="afm:AFUA_1G15450"/>
<dbReference type="VEuPathDB" id="FungiDB:Afu1g15450"/>
<dbReference type="eggNOG" id="KOG1355">
    <property type="taxonomic scope" value="Eukaryota"/>
</dbReference>
<dbReference type="HOGENOM" id="CLU_029848_3_2_1"/>
<dbReference type="InParanoid" id="Q4WRQ7"/>
<dbReference type="OMA" id="FHHAKPI"/>
<dbReference type="OrthoDB" id="10265645at2759"/>
<dbReference type="UniPathway" id="UPA00075">
    <property type="reaction ID" value="UER00335"/>
</dbReference>
<dbReference type="Proteomes" id="UP000002530">
    <property type="component" value="Chromosome 1"/>
</dbReference>
<dbReference type="GO" id="GO:0005737">
    <property type="term" value="C:cytoplasm"/>
    <property type="evidence" value="ECO:0000318"/>
    <property type="project" value="GO_Central"/>
</dbReference>
<dbReference type="GO" id="GO:0004019">
    <property type="term" value="F:adenylosuccinate synthase activity"/>
    <property type="evidence" value="ECO:0000318"/>
    <property type="project" value="GO_Central"/>
</dbReference>
<dbReference type="GO" id="GO:0016208">
    <property type="term" value="F:AMP binding"/>
    <property type="evidence" value="ECO:0007669"/>
    <property type="project" value="EnsemblFungi"/>
</dbReference>
<dbReference type="GO" id="GO:0019002">
    <property type="term" value="F:GMP binding"/>
    <property type="evidence" value="ECO:0007669"/>
    <property type="project" value="EnsemblFungi"/>
</dbReference>
<dbReference type="GO" id="GO:0005525">
    <property type="term" value="F:GTP binding"/>
    <property type="evidence" value="ECO:0007669"/>
    <property type="project" value="UniProtKB-UniRule"/>
</dbReference>
<dbReference type="GO" id="GO:0000287">
    <property type="term" value="F:magnesium ion binding"/>
    <property type="evidence" value="ECO:0007669"/>
    <property type="project" value="UniProtKB-UniRule"/>
</dbReference>
<dbReference type="GO" id="GO:0044208">
    <property type="term" value="P:'de novo' AMP biosynthetic process"/>
    <property type="evidence" value="ECO:0000318"/>
    <property type="project" value="GO_Central"/>
</dbReference>
<dbReference type="GO" id="GO:0071276">
    <property type="term" value="P:cellular response to cadmium ion"/>
    <property type="evidence" value="ECO:0007669"/>
    <property type="project" value="EnsemblFungi"/>
</dbReference>
<dbReference type="GO" id="GO:0046040">
    <property type="term" value="P:IMP metabolic process"/>
    <property type="evidence" value="ECO:0000318"/>
    <property type="project" value="GO_Central"/>
</dbReference>
<dbReference type="CDD" id="cd03108">
    <property type="entry name" value="AdSS"/>
    <property type="match status" value="1"/>
</dbReference>
<dbReference type="FunFam" id="1.10.300.10:FF:000001">
    <property type="entry name" value="Adenylosuccinate synthetase"/>
    <property type="match status" value="1"/>
</dbReference>
<dbReference type="FunFam" id="3.90.170.10:FF:000001">
    <property type="entry name" value="Adenylosuccinate synthetase"/>
    <property type="match status" value="1"/>
</dbReference>
<dbReference type="Gene3D" id="3.40.440.10">
    <property type="entry name" value="Adenylosuccinate Synthetase, subunit A, domain 1"/>
    <property type="match status" value="1"/>
</dbReference>
<dbReference type="Gene3D" id="1.10.300.10">
    <property type="entry name" value="Adenylosuccinate Synthetase, subunit A, domain 2"/>
    <property type="match status" value="1"/>
</dbReference>
<dbReference type="Gene3D" id="3.90.170.10">
    <property type="entry name" value="Adenylosuccinate Synthetase, subunit A, domain 3"/>
    <property type="match status" value="1"/>
</dbReference>
<dbReference type="HAMAP" id="MF_00011">
    <property type="entry name" value="Adenylosucc_synth"/>
    <property type="match status" value="1"/>
</dbReference>
<dbReference type="InterPro" id="IPR018220">
    <property type="entry name" value="Adenylosuccin_syn_GTP-bd"/>
</dbReference>
<dbReference type="InterPro" id="IPR033128">
    <property type="entry name" value="Adenylosuccin_syn_Lys_AS"/>
</dbReference>
<dbReference type="InterPro" id="IPR042109">
    <property type="entry name" value="Adenylosuccinate_synth_dom1"/>
</dbReference>
<dbReference type="InterPro" id="IPR042110">
    <property type="entry name" value="Adenylosuccinate_synth_dom2"/>
</dbReference>
<dbReference type="InterPro" id="IPR042111">
    <property type="entry name" value="Adenylosuccinate_synth_dom3"/>
</dbReference>
<dbReference type="InterPro" id="IPR001114">
    <property type="entry name" value="Adenylosuccinate_synthetase"/>
</dbReference>
<dbReference type="InterPro" id="IPR027417">
    <property type="entry name" value="P-loop_NTPase"/>
</dbReference>
<dbReference type="NCBIfam" id="NF002223">
    <property type="entry name" value="PRK01117.1"/>
    <property type="match status" value="1"/>
</dbReference>
<dbReference type="NCBIfam" id="TIGR00184">
    <property type="entry name" value="purA"/>
    <property type="match status" value="1"/>
</dbReference>
<dbReference type="PANTHER" id="PTHR11846">
    <property type="entry name" value="ADENYLOSUCCINATE SYNTHETASE"/>
    <property type="match status" value="1"/>
</dbReference>
<dbReference type="PANTHER" id="PTHR11846:SF0">
    <property type="entry name" value="ADENYLOSUCCINATE SYNTHETASE"/>
    <property type="match status" value="1"/>
</dbReference>
<dbReference type="Pfam" id="PF00709">
    <property type="entry name" value="Adenylsucc_synt"/>
    <property type="match status" value="1"/>
</dbReference>
<dbReference type="SMART" id="SM00788">
    <property type="entry name" value="Adenylsucc_synt"/>
    <property type="match status" value="1"/>
</dbReference>
<dbReference type="SUPFAM" id="SSF52540">
    <property type="entry name" value="P-loop containing nucleoside triphosphate hydrolases"/>
    <property type="match status" value="1"/>
</dbReference>
<dbReference type="PROSITE" id="PS01266">
    <property type="entry name" value="ADENYLOSUCCIN_SYN_1"/>
    <property type="match status" value="1"/>
</dbReference>
<dbReference type="PROSITE" id="PS00513">
    <property type="entry name" value="ADENYLOSUCCIN_SYN_2"/>
    <property type="match status" value="1"/>
</dbReference>
<reference key="1">
    <citation type="journal article" date="2005" name="Nature">
        <title>Genomic sequence of the pathogenic and allergenic filamentous fungus Aspergillus fumigatus.</title>
        <authorList>
            <person name="Nierman W.C."/>
            <person name="Pain A."/>
            <person name="Anderson M.J."/>
            <person name="Wortman J.R."/>
            <person name="Kim H.S."/>
            <person name="Arroyo J."/>
            <person name="Berriman M."/>
            <person name="Abe K."/>
            <person name="Archer D.B."/>
            <person name="Bermejo C."/>
            <person name="Bennett J.W."/>
            <person name="Bowyer P."/>
            <person name="Chen D."/>
            <person name="Collins M."/>
            <person name="Coulsen R."/>
            <person name="Davies R."/>
            <person name="Dyer P.S."/>
            <person name="Farman M.L."/>
            <person name="Fedorova N."/>
            <person name="Fedorova N.D."/>
            <person name="Feldblyum T.V."/>
            <person name="Fischer R."/>
            <person name="Fosker N."/>
            <person name="Fraser A."/>
            <person name="Garcia J.L."/>
            <person name="Garcia M.J."/>
            <person name="Goble A."/>
            <person name="Goldman G.H."/>
            <person name="Gomi K."/>
            <person name="Griffith-Jones S."/>
            <person name="Gwilliam R."/>
            <person name="Haas B.J."/>
            <person name="Haas H."/>
            <person name="Harris D.E."/>
            <person name="Horiuchi H."/>
            <person name="Huang J."/>
            <person name="Humphray S."/>
            <person name="Jimenez J."/>
            <person name="Keller N."/>
            <person name="Khouri H."/>
            <person name="Kitamoto K."/>
            <person name="Kobayashi T."/>
            <person name="Konzack S."/>
            <person name="Kulkarni R."/>
            <person name="Kumagai T."/>
            <person name="Lafton A."/>
            <person name="Latge J.-P."/>
            <person name="Li W."/>
            <person name="Lord A."/>
            <person name="Lu C."/>
            <person name="Majoros W.H."/>
            <person name="May G.S."/>
            <person name="Miller B.L."/>
            <person name="Mohamoud Y."/>
            <person name="Molina M."/>
            <person name="Monod M."/>
            <person name="Mouyna I."/>
            <person name="Mulligan S."/>
            <person name="Murphy L.D."/>
            <person name="O'Neil S."/>
            <person name="Paulsen I."/>
            <person name="Penalva M.A."/>
            <person name="Pertea M."/>
            <person name="Price C."/>
            <person name="Pritchard B.L."/>
            <person name="Quail M.A."/>
            <person name="Rabbinowitsch E."/>
            <person name="Rawlins N."/>
            <person name="Rajandream M.A."/>
            <person name="Reichard U."/>
            <person name="Renauld H."/>
            <person name="Robson G.D."/>
            <person name="Rodriguez de Cordoba S."/>
            <person name="Rodriguez-Pena J.M."/>
            <person name="Ronning C.M."/>
            <person name="Rutter S."/>
            <person name="Salzberg S.L."/>
            <person name="Sanchez M."/>
            <person name="Sanchez-Ferrero J.C."/>
            <person name="Saunders D."/>
            <person name="Seeger K."/>
            <person name="Squares R."/>
            <person name="Squares S."/>
            <person name="Takeuchi M."/>
            <person name="Tekaia F."/>
            <person name="Turner G."/>
            <person name="Vazquez de Aldana C.R."/>
            <person name="Weidman J."/>
            <person name="White O."/>
            <person name="Woodward J.R."/>
            <person name="Yu J.-H."/>
            <person name="Fraser C.M."/>
            <person name="Galagan J.E."/>
            <person name="Asai K."/>
            <person name="Machida M."/>
            <person name="Hall N."/>
            <person name="Barrell B.G."/>
            <person name="Denning D.W."/>
        </authorList>
    </citation>
    <scope>NUCLEOTIDE SEQUENCE [LARGE SCALE GENOMIC DNA]</scope>
    <source>
        <strain>ATCC MYA-4609 / CBS 101355 / FGSC A1100 / Af293</strain>
    </source>
</reference>
<organism>
    <name type="scientific">Aspergillus fumigatus (strain ATCC MYA-4609 / CBS 101355 / FGSC A1100 / Af293)</name>
    <name type="common">Neosartorya fumigata</name>
    <dbReference type="NCBI Taxonomy" id="330879"/>
    <lineage>
        <taxon>Eukaryota</taxon>
        <taxon>Fungi</taxon>
        <taxon>Dikarya</taxon>
        <taxon>Ascomycota</taxon>
        <taxon>Pezizomycotina</taxon>
        <taxon>Eurotiomycetes</taxon>
        <taxon>Eurotiomycetidae</taxon>
        <taxon>Eurotiales</taxon>
        <taxon>Aspergillaceae</taxon>
        <taxon>Aspergillus</taxon>
        <taxon>Aspergillus subgen. Fumigati</taxon>
    </lineage>
</organism>
<evidence type="ECO:0000250" key="1"/>
<evidence type="ECO:0000255" key="2">
    <source>
        <dbReference type="HAMAP-Rule" id="MF_03125"/>
    </source>
</evidence>
<gene>
    <name type="ORF">AFUA_1G15450</name>
</gene>